<feature type="chain" id="PRO_0000380062" description="GTP-dependent dephospho-CoA kinase">
    <location>
        <begin position="1"/>
        <end position="178"/>
    </location>
</feature>
<feature type="binding site" evidence="1">
    <location>
        <position position="48"/>
    </location>
    <ligand>
        <name>GTP</name>
        <dbReference type="ChEBI" id="CHEBI:37565"/>
    </ligand>
</feature>
<feature type="binding site" evidence="1">
    <location>
        <position position="49"/>
    </location>
    <ligand>
        <name>GTP</name>
        <dbReference type="ChEBI" id="CHEBI:37565"/>
    </ligand>
</feature>
<feature type="binding site" evidence="1">
    <location>
        <position position="67"/>
    </location>
    <ligand>
        <name>GTP</name>
        <dbReference type="ChEBI" id="CHEBI:37565"/>
    </ligand>
</feature>
<feature type="binding site" evidence="1">
    <location>
        <position position="69"/>
    </location>
    <ligand>
        <name>GTP</name>
        <dbReference type="ChEBI" id="CHEBI:37565"/>
    </ligand>
</feature>
<feature type="binding site" evidence="1">
    <location>
        <position position="126"/>
    </location>
    <ligand>
        <name>GTP</name>
        <dbReference type="ChEBI" id="CHEBI:37565"/>
    </ligand>
</feature>
<comment type="function">
    <text evidence="1">Catalyzes the GTP-dependent phosphorylation of the 3'-hydroxyl group of dephosphocoenzyme A to form coenzyme A (CoA).</text>
</comment>
<comment type="catalytic activity">
    <reaction evidence="1">
        <text>3'-dephospho-CoA + GTP = GDP + CoA + H(+)</text>
        <dbReference type="Rhea" id="RHEA:61156"/>
        <dbReference type="ChEBI" id="CHEBI:15378"/>
        <dbReference type="ChEBI" id="CHEBI:37565"/>
        <dbReference type="ChEBI" id="CHEBI:57287"/>
        <dbReference type="ChEBI" id="CHEBI:57328"/>
        <dbReference type="ChEBI" id="CHEBI:58189"/>
        <dbReference type="EC" id="2.7.1.237"/>
    </reaction>
</comment>
<comment type="pathway">
    <text evidence="1">Cofactor biosynthesis; coenzyme A biosynthesis.</text>
</comment>
<comment type="similarity">
    <text evidence="1">Belongs to the GTP-dependent DPCK family.</text>
</comment>
<gene>
    <name type="ordered locus">Mthe_1323</name>
</gene>
<protein>
    <recommendedName>
        <fullName evidence="1">GTP-dependent dephospho-CoA kinase</fullName>
        <ecNumber evidence="1">2.7.1.237</ecNumber>
    </recommendedName>
    <alternativeName>
        <fullName evidence="1">Dephospho-coenzyme A kinase</fullName>
        <shortName evidence="1">DPCK</shortName>
    </alternativeName>
</protein>
<sequence length="178" mass="19834">MRVLVLPEELRDELKEPLGVLYRCHGVECVERMSDHLRAAERVIAVGDITTFYLLKASFIPDLMIVDHKTKRSPVEDSIKRRHLEGSYRVVNVENPAGTLTEELLDAVRESLNGCTPTEIIVDGEEDLAALPAILYAPLGSAVVYGQPSVGSVLVMVTPEKKREIEGILRRMTVKEKV</sequence>
<proteinExistence type="inferred from homology"/>
<evidence type="ECO:0000255" key="1">
    <source>
        <dbReference type="HAMAP-Rule" id="MF_00590"/>
    </source>
</evidence>
<reference key="1">
    <citation type="submission" date="2006-10" db="EMBL/GenBank/DDBJ databases">
        <title>Complete sequence of Methanosaeta thermophila PT.</title>
        <authorList>
            <consortium name="US DOE Joint Genome Institute"/>
            <person name="Copeland A."/>
            <person name="Lucas S."/>
            <person name="Lapidus A."/>
            <person name="Barry K."/>
            <person name="Detter J.C."/>
            <person name="Glavina del Rio T."/>
            <person name="Hammon N."/>
            <person name="Israni S."/>
            <person name="Pitluck S."/>
            <person name="Chain P."/>
            <person name="Malfatti S."/>
            <person name="Shin M."/>
            <person name="Vergez L."/>
            <person name="Schmutz J."/>
            <person name="Larimer F."/>
            <person name="Land M."/>
            <person name="Hauser L."/>
            <person name="Kyrpides N."/>
            <person name="Kim E."/>
            <person name="Smith K.S."/>
            <person name="Ingram-Smith C."/>
            <person name="Richardson P."/>
        </authorList>
    </citation>
    <scope>NUCLEOTIDE SEQUENCE [LARGE SCALE GENOMIC DNA]</scope>
    <source>
        <strain>DSM 6194 / JCM 14653 / NBRC 101360 / PT</strain>
    </source>
</reference>
<organism>
    <name type="scientific">Methanothrix thermoacetophila (strain DSM 6194 / JCM 14653 / NBRC 101360 / PT)</name>
    <name type="common">Methanosaeta thermophila</name>
    <dbReference type="NCBI Taxonomy" id="349307"/>
    <lineage>
        <taxon>Archaea</taxon>
        <taxon>Methanobacteriati</taxon>
        <taxon>Methanobacteriota</taxon>
        <taxon>Stenosarchaea group</taxon>
        <taxon>Methanomicrobia</taxon>
        <taxon>Methanotrichales</taxon>
        <taxon>Methanotrichaceae</taxon>
        <taxon>Methanothrix</taxon>
    </lineage>
</organism>
<keyword id="KW-0173">Coenzyme A biosynthesis</keyword>
<keyword id="KW-0342">GTP-binding</keyword>
<keyword id="KW-0418">Kinase</keyword>
<keyword id="KW-0547">Nucleotide-binding</keyword>
<keyword id="KW-1185">Reference proteome</keyword>
<keyword id="KW-0808">Transferase</keyword>
<accession>A0B8S7</accession>
<name>DPCKG_METTP</name>
<dbReference type="EC" id="2.7.1.237" evidence="1"/>
<dbReference type="EMBL" id="CP000477">
    <property type="protein sequence ID" value="ABK15101.1"/>
    <property type="molecule type" value="Genomic_DNA"/>
</dbReference>
<dbReference type="RefSeq" id="WP_011696493.1">
    <property type="nucleotide sequence ID" value="NC_008553.1"/>
</dbReference>
<dbReference type="SMR" id="A0B8S7"/>
<dbReference type="STRING" id="349307.Mthe_1323"/>
<dbReference type="GeneID" id="4462130"/>
<dbReference type="KEGG" id="mtp:Mthe_1323"/>
<dbReference type="HOGENOM" id="CLU_120795_1_0_2"/>
<dbReference type="OrthoDB" id="15447at2157"/>
<dbReference type="UniPathway" id="UPA00241"/>
<dbReference type="Proteomes" id="UP000000674">
    <property type="component" value="Chromosome"/>
</dbReference>
<dbReference type="GO" id="GO:0005525">
    <property type="term" value="F:GTP binding"/>
    <property type="evidence" value="ECO:0007669"/>
    <property type="project" value="UniProtKB-UniRule"/>
</dbReference>
<dbReference type="GO" id="GO:0016301">
    <property type="term" value="F:kinase activity"/>
    <property type="evidence" value="ECO:0007669"/>
    <property type="project" value="UniProtKB-UniRule"/>
</dbReference>
<dbReference type="GO" id="GO:0015937">
    <property type="term" value="P:coenzyme A biosynthetic process"/>
    <property type="evidence" value="ECO:0007669"/>
    <property type="project" value="UniProtKB-UniRule"/>
</dbReference>
<dbReference type="HAMAP" id="MF_00590">
    <property type="entry name" value="Dephospho_CoA_kinase_GTP_dep"/>
    <property type="match status" value="1"/>
</dbReference>
<dbReference type="InterPro" id="IPR007164">
    <property type="entry name" value="GTP-dep_dephospho-CoA_kin"/>
</dbReference>
<dbReference type="PANTHER" id="PTHR40732:SF1">
    <property type="entry name" value="GTP-DEPENDENT DEPHOSPHO-COA KINASE"/>
    <property type="match status" value="1"/>
</dbReference>
<dbReference type="PANTHER" id="PTHR40732">
    <property type="entry name" value="UPF0218 PROTEIN TK1697"/>
    <property type="match status" value="1"/>
</dbReference>
<dbReference type="Pfam" id="PF04019">
    <property type="entry name" value="DUF359"/>
    <property type="match status" value="1"/>
</dbReference>
<dbReference type="PIRSF" id="PIRSF006533">
    <property type="entry name" value="UCP006533"/>
    <property type="match status" value="1"/>
</dbReference>